<dbReference type="EC" id="2.6.1.11" evidence="1"/>
<dbReference type="EMBL" id="AE000782">
    <property type="protein sequence ID" value="AAB91150.1"/>
    <property type="molecule type" value="Genomic_DNA"/>
</dbReference>
<dbReference type="PIR" id="H69259">
    <property type="entry name" value="H69259"/>
</dbReference>
<dbReference type="RefSeq" id="WP_010877594.1">
    <property type="nucleotide sequence ID" value="NC_000917.1"/>
</dbReference>
<dbReference type="SMR" id="O30156"/>
<dbReference type="STRING" id="224325.AF_0080"/>
<dbReference type="PaxDb" id="224325-AF_0080"/>
<dbReference type="EnsemblBacteria" id="AAB91150">
    <property type="protein sequence ID" value="AAB91150"/>
    <property type="gene ID" value="AF_0080"/>
</dbReference>
<dbReference type="KEGG" id="afu:AF_0080"/>
<dbReference type="eggNOG" id="arCOG00914">
    <property type="taxonomic scope" value="Archaea"/>
</dbReference>
<dbReference type="HOGENOM" id="CLU_016922_10_1_2"/>
<dbReference type="OrthoDB" id="85346at2157"/>
<dbReference type="PhylomeDB" id="O30156"/>
<dbReference type="UniPathway" id="UPA00068">
    <property type="reaction ID" value="UER00109"/>
</dbReference>
<dbReference type="Proteomes" id="UP000002199">
    <property type="component" value="Chromosome"/>
</dbReference>
<dbReference type="GO" id="GO:0005737">
    <property type="term" value="C:cytoplasm"/>
    <property type="evidence" value="ECO:0007669"/>
    <property type="project" value="UniProtKB-SubCell"/>
</dbReference>
<dbReference type="GO" id="GO:0042802">
    <property type="term" value="F:identical protein binding"/>
    <property type="evidence" value="ECO:0007669"/>
    <property type="project" value="TreeGrafter"/>
</dbReference>
<dbReference type="GO" id="GO:0003992">
    <property type="term" value="F:N2-acetyl-L-ornithine:2-oxoglutarate 5-aminotransferase activity"/>
    <property type="evidence" value="ECO:0007669"/>
    <property type="project" value="UniProtKB-UniRule"/>
</dbReference>
<dbReference type="GO" id="GO:0030170">
    <property type="term" value="F:pyridoxal phosphate binding"/>
    <property type="evidence" value="ECO:0007669"/>
    <property type="project" value="InterPro"/>
</dbReference>
<dbReference type="GO" id="GO:0006526">
    <property type="term" value="P:L-arginine biosynthetic process"/>
    <property type="evidence" value="ECO:0007669"/>
    <property type="project" value="UniProtKB-UniRule"/>
</dbReference>
<dbReference type="CDD" id="cd00610">
    <property type="entry name" value="OAT_like"/>
    <property type="match status" value="1"/>
</dbReference>
<dbReference type="FunFam" id="3.40.640.10:FF:000004">
    <property type="entry name" value="Acetylornithine aminotransferase"/>
    <property type="match status" value="1"/>
</dbReference>
<dbReference type="Gene3D" id="3.90.1150.10">
    <property type="entry name" value="Aspartate Aminotransferase, domain 1"/>
    <property type="match status" value="1"/>
</dbReference>
<dbReference type="Gene3D" id="3.40.640.10">
    <property type="entry name" value="Type I PLP-dependent aspartate aminotransferase-like (Major domain)"/>
    <property type="match status" value="1"/>
</dbReference>
<dbReference type="HAMAP" id="MF_01107">
    <property type="entry name" value="ArgD_aminotrans_3"/>
    <property type="match status" value="1"/>
</dbReference>
<dbReference type="InterPro" id="IPR004636">
    <property type="entry name" value="AcOrn/SuccOrn_fam"/>
</dbReference>
<dbReference type="InterPro" id="IPR005814">
    <property type="entry name" value="Aminotrans_3"/>
</dbReference>
<dbReference type="InterPro" id="IPR049704">
    <property type="entry name" value="Aminotrans_3_PPA_site"/>
</dbReference>
<dbReference type="InterPro" id="IPR050103">
    <property type="entry name" value="Class-III_PLP-dep_AT"/>
</dbReference>
<dbReference type="InterPro" id="IPR015424">
    <property type="entry name" value="PyrdxlP-dep_Trfase"/>
</dbReference>
<dbReference type="InterPro" id="IPR015421">
    <property type="entry name" value="PyrdxlP-dep_Trfase_major"/>
</dbReference>
<dbReference type="InterPro" id="IPR015422">
    <property type="entry name" value="PyrdxlP-dep_Trfase_small"/>
</dbReference>
<dbReference type="NCBIfam" id="TIGR00707">
    <property type="entry name" value="argD"/>
    <property type="match status" value="1"/>
</dbReference>
<dbReference type="NCBIfam" id="NF002325">
    <property type="entry name" value="PRK01278.1"/>
    <property type="match status" value="1"/>
</dbReference>
<dbReference type="PANTHER" id="PTHR11986:SF79">
    <property type="entry name" value="ACETYLORNITHINE AMINOTRANSFERASE, MITOCHONDRIAL"/>
    <property type="match status" value="1"/>
</dbReference>
<dbReference type="PANTHER" id="PTHR11986">
    <property type="entry name" value="AMINOTRANSFERASE CLASS III"/>
    <property type="match status" value="1"/>
</dbReference>
<dbReference type="Pfam" id="PF00202">
    <property type="entry name" value="Aminotran_3"/>
    <property type="match status" value="1"/>
</dbReference>
<dbReference type="PIRSF" id="PIRSF000521">
    <property type="entry name" value="Transaminase_4ab_Lys_Orn"/>
    <property type="match status" value="1"/>
</dbReference>
<dbReference type="SUPFAM" id="SSF53383">
    <property type="entry name" value="PLP-dependent transferases"/>
    <property type="match status" value="1"/>
</dbReference>
<dbReference type="PROSITE" id="PS00600">
    <property type="entry name" value="AA_TRANSFER_CLASS_3"/>
    <property type="match status" value="1"/>
</dbReference>
<sequence>MDWIEREKKHILQTYTRQKVVIERGEGCYVYDVNGKRYLDLVAGIATVSIGHCNSHLVERLKEQLEKLIHISNLYYTTPQVELAEKLSEIAGMDRFFFCNSGAEAVEAALKFARRATGRKKFVSFTGDFHGRTMGALSVTHKEKFRKPFEPLVSPVEFAEFNNPESLEKVVDEETAAVIVELVQGEAGVYPADREFVKAIEELREKYGFLLIVDEVQTGFGRTGRWFAKDHYGIEPDMITMAKAMGSGVPIGCCALKEEVAEKIQVGDHGSTFGGNPLACTAALATIEVIEREGLVENSARMGEYFVKRLKESFENVIGVGLMIGFDVGDAAEFVRKCLENGLLVNNTSERRIRLVPPLVITEREVDKAVEIMLN</sequence>
<reference key="1">
    <citation type="journal article" date="1997" name="Nature">
        <title>The complete genome sequence of the hyperthermophilic, sulphate-reducing archaeon Archaeoglobus fulgidus.</title>
        <authorList>
            <person name="Klenk H.-P."/>
            <person name="Clayton R.A."/>
            <person name="Tomb J.-F."/>
            <person name="White O."/>
            <person name="Nelson K.E."/>
            <person name="Ketchum K.A."/>
            <person name="Dodson R.J."/>
            <person name="Gwinn M.L."/>
            <person name="Hickey E.K."/>
            <person name="Peterson J.D."/>
            <person name="Richardson D.L."/>
            <person name="Kerlavage A.R."/>
            <person name="Graham D.E."/>
            <person name="Kyrpides N.C."/>
            <person name="Fleischmann R.D."/>
            <person name="Quackenbush J."/>
            <person name="Lee N.H."/>
            <person name="Sutton G.G."/>
            <person name="Gill S.R."/>
            <person name="Kirkness E.F."/>
            <person name="Dougherty B.A."/>
            <person name="McKenney K."/>
            <person name="Adams M.D."/>
            <person name="Loftus B.J."/>
            <person name="Peterson S.N."/>
            <person name="Reich C.I."/>
            <person name="McNeil L.K."/>
            <person name="Badger J.H."/>
            <person name="Glodek A."/>
            <person name="Zhou L."/>
            <person name="Overbeek R."/>
            <person name="Gocayne J.D."/>
            <person name="Weidman J.F."/>
            <person name="McDonald L.A."/>
            <person name="Utterback T.R."/>
            <person name="Cotton M.D."/>
            <person name="Spriggs T."/>
            <person name="Artiach P."/>
            <person name="Kaine B.P."/>
            <person name="Sykes S.M."/>
            <person name="Sadow P.W."/>
            <person name="D'Andrea K.P."/>
            <person name="Bowman C."/>
            <person name="Fujii C."/>
            <person name="Garland S.A."/>
            <person name="Mason T.M."/>
            <person name="Olsen G.J."/>
            <person name="Fraser C.M."/>
            <person name="Smith H.O."/>
            <person name="Woese C.R."/>
            <person name="Venter J.C."/>
        </authorList>
    </citation>
    <scope>NUCLEOTIDE SEQUENCE [LARGE SCALE GENOMIC DNA]</scope>
    <source>
        <strain>ATCC 49558 / DSM 4304 / JCM 9628 / NBRC 100126 / VC-16</strain>
    </source>
</reference>
<keyword id="KW-0028">Amino-acid biosynthesis</keyword>
<keyword id="KW-0032">Aminotransferase</keyword>
<keyword id="KW-0055">Arginine biosynthesis</keyword>
<keyword id="KW-0963">Cytoplasm</keyword>
<keyword id="KW-0663">Pyridoxal phosphate</keyword>
<keyword id="KW-1185">Reference proteome</keyword>
<keyword id="KW-0808">Transferase</keyword>
<gene>
    <name evidence="1" type="primary">argD</name>
    <name type="ordered locus">AF_0080</name>
</gene>
<accession>O30156</accession>
<comment type="catalytic activity">
    <reaction evidence="1">
        <text>N(2)-acetyl-L-ornithine + 2-oxoglutarate = N-acetyl-L-glutamate 5-semialdehyde + L-glutamate</text>
        <dbReference type="Rhea" id="RHEA:18049"/>
        <dbReference type="ChEBI" id="CHEBI:16810"/>
        <dbReference type="ChEBI" id="CHEBI:29123"/>
        <dbReference type="ChEBI" id="CHEBI:29985"/>
        <dbReference type="ChEBI" id="CHEBI:57805"/>
        <dbReference type="EC" id="2.6.1.11"/>
    </reaction>
</comment>
<comment type="cofactor">
    <cofactor evidence="1">
        <name>pyridoxal 5'-phosphate</name>
        <dbReference type="ChEBI" id="CHEBI:597326"/>
    </cofactor>
    <text evidence="1">Binds 1 pyridoxal phosphate per subunit.</text>
</comment>
<comment type="pathway">
    <text evidence="1">Amino-acid biosynthesis; L-arginine biosynthesis; N(2)-acetyl-L-ornithine from L-glutamate: step 4/4.</text>
</comment>
<comment type="subunit">
    <text evidence="1">Homodimer.</text>
</comment>
<comment type="subcellular location">
    <subcellularLocation>
        <location evidence="1">Cytoplasm</location>
    </subcellularLocation>
</comment>
<comment type="miscellaneous">
    <text evidence="1">May also have succinyldiaminopimelate aminotransferase activity, thus carrying out the corresponding step in lysine biosynthesis.</text>
</comment>
<comment type="similarity">
    <text evidence="1">Belongs to the class-III pyridoxal-phosphate-dependent aminotransferase family. ArgD subfamily.</text>
</comment>
<proteinExistence type="inferred from homology"/>
<evidence type="ECO:0000255" key="1">
    <source>
        <dbReference type="HAMAP-Rule" id="MF_01107"/>
    </source>
</evidence>
<feature type="chain" id="PRO_0000112819" description="Acetylornithine aminotransferase">
    <location>
        <begin position="1"/>
        <end position="375"/>
    </location>
</feature>
<feature type="binding site" evidence="1">
    <location>
        <begin position="102"/>
        <end position="103"/>
    </location>
    <ligand>
        <name>pyridoxal 5'-phosphate</name>
        <dbReference type="ChEBI" id="CHEBI:597326"/>
    </ligand>
</feature>
<feature type="binding site" evidence="1">
    <location>
        <position position="129"/>
    </location>
    <ligand>
        <name>pyridoxal 5'-phosphate</name>
        <dbReference type="ChEBI" id="CHEBI:597326"/>
    </ligand>
</feature>
<feature type="binding site" evidence="1">
    <location>
        <position position="132"/>
    </location>
    <ligand>
        <name>N(2)-acetyl-L-ornithine</name>
        <dbReference type="ChEBI" id="CHEBI:57805"/>
    </ligand>
</feature>
<feature type="binding site" evidence="1">
    <location>
        <begin position="214"/>
        <end position="217"/>
    </location>
    <ligand>
        <name>pyridoxal 5'-phosphate</name>
        <dbReference type="ChEBI" id="CHEBI:597326"/>
    </ligand>
</feature>
<feature type="binding site" evidence="1">
    <location>
        <position position="271"/>
    </location>
    <ligand>
        <name>N(2)-acetyl-L-ornithine</name>
        <dbReference type="ChEBI" id="CHEBI:57805"/>
    </ligand>
</feature>
<feature type="binding site" evidence="1">
    <location>
        <position position="272"/>
    </location>
    <ligand>
        <name>pyridoxal 5'-phosphate</name>
        <dbReference type="ChEBI" id="CHEBI:597326"/>
    </ligand>
</feature>
<feature type="modified residue" description="N6-(pyridoxal phosphate)lysine" evidence="1">
    <location>
        <position position="243"/>
    </location>
</feature>
<name>ARGD_ARCFU</name>
<organism>
    <name type="scientific">Archaeoglobus fulgidus (strain ATCC 49558 / DSM 4304 / JCM 9628 / NBRC 100126 / VC-16)</name>
    <dbReference type="NCBI Taxonomy" id="224325"/>
    <lineage>
        <taxon>Archaea</taxon>
        <taxon>Methanobacteriati</taxon>
        <taxon>Methanobacteriota</taxon>
        <taxon>Archaeoglobi</taxon>
        <taxon>Archaeoglobales</taxon>
        <taxon>Archaeoglobaceae</taxon>
        <taxon>Archaeoglobus</taxon>
    </lineage>
</organism>
<protein>
    <recommendedName>
        <fullName evidence="1">Acetylornithine aminotransferase</fullName>
        <shortName evidence="1">ACOAT</shortName>
        <ecNumber evidence="1">2.6.1.11</ecNumber>
    </recommendedName>
</protein>